<proteinExistence type="inferred from homology"/>
<dbReference type="EC" id="3.1.-.-" evidence="1"/>
<dbReference type="EMBL" id="CP001147">
    <property type="protein sequence ID" value="ACI20463.1"/>
    <property type="molecule type" value="Genomic_DNA"/>
</dbReference>
<dbReference type="RefSeq" id="WP_012545199.1">
    <property type="nucleotide sequence ID" value="NC_011296.1"/>
</dbReference>
<dbReference type="RefSeq" id="YP_002248486.1">
    <property type="nucleotide sequence ID" value="NC_011296.1"/>
</dbReference>
<dbReference type="SMR" id="B5YJS1"/>
<dbReference type="STRING" id="289376.THEYE_A0643"/>
<dbReference type="EnsemblBacteria" id="ACI20463">
    <property type="protein sequence ID" value="ACI20463"/>
    <property type="gene ID" value="THEYE_A0643"/>
</dbReference>
<dbReference type="KEGG" id="tye:THEYE_A0643"/>
<dbReference type="PATRIC" id="fig|289376.4.peg.637"/>
<dbReference type="eggNOG" id="COG1343">
    <property type="taxonomic scope" value="Bacteria"/>
</dbReference>
<dbReference type="HOGENOM" id="CLU_161124_3_2_0"/>
<dbReference type="InParanoid" id="B5YJS1"/>
<dbReference type="OrthoDB" id="9798176at2"/>
<dbReference type="Proteomes" id="UP000000718">
    <property type="component" value="Chromosome"/>
</dbReference>
<dbReference type="GO" id="GO:0046872">
    <property type="term" value="F:metal ion binding"/>
    <property type="evidence" value="ECO:0007669"/>
    <property type="project" value="UniProtKB-UniRule"/>
</dbReference>
<dbReference type="GO" id="GO:0004521">
    <property type="term" value="F:RNA endonuclease activity"/>
    <property type="evidence" value="ECO:0007669"/>
    <property type="project" value="InterPro"/>
</dbReference>
<dbReference type="GO" id="GO:0051607">
    <property type="term" value="P:defense response to virus"/>
    <property type="evidence" value="ECO:0007669"/>
    <property type="project" value="UniProtKB-UniRule"/>
</dbReference>
<dbReference type="GO" id="GO:0043571">
    <property type="term" value="P:maintenance of CRISPR repeat elements"/>
    <property type="evidence" value="ECO:0007669"/>
    <property type="project" value="UniProtKB-UniRule"/>
</dbReference>
<dbReference type="CDD" id="cd09725">
    <property type="entry name" value="Cas2_I_II_III"/>
    <property type="match status" value="1"/>
</dbReference>
<dbReference type="Gene3D" id="3.30.70.240">
    <property type="match status" value="1"/>
</dbReference>
<dbReference type="HAMAP" id="MF_01471">
    <property type="entry name" value="Cas2"/>
    <property type="match status" value="1"/>
</dbReference>
<dbReference type="InterPro" id="IPR021127">
    <property type="entry name" value="CRISPR_associated_Cas2"/>
</dbReference>
<dbReference type="InterPro" id="IPR019199">
    <property type="entry name" value="Virulence_VapD/CRISPR_Cas2"/>
</dbReference>
<dbReference type="NCBIfam" id="TIGR01573">
    <property type="entry name" value="cas2"/>
    <property type="match status" value="1"/>
</dbReference>
<dbReference type="PANTHER" id="PTHR34405">
    <property type="entry name" value="CRISPR-ASSOCIATED ENDORIBONUCLEASE CAS2"/>
    <property type="match status" value="1"/>
</dbReference>
<dbReference type="PANTHER" id="PTHR34405:SF3">
    <property type="entry name" value="CRISPR-ASSOCIATED ENDORIBONUCLEASE CAS2 3"/>
    <property type="match status" value="1"/>
</dbReference>
<dbReference type="Pfam" id="PF09827">
    <property type="entry name" value="CRISPR_Cas2"/>
    <property type="match status" value="1"/>
</dbReference>
<dbReference type="SUPFAM" id="SSF143430">
    <property type="entry name" value="TTP0101/SSO1404-like"/>
    <property type="match status" value="1"/>
</dbReference>
<accession>B5YJS1</accession>
<comment type="function">
    <text evidence="1">CRISPR (clustered regularly interspaced short palindromic repeat), is an adaptive immune system that provides protection against mobile genetic elements (viruses, transposable elements and conjugative plasmids). CRISPR clusters contain sequences complementary to antecedent mobile elements and target invading nucleic acids. CRISPR clusters are transcribed and processed into CRISPR RNA (crRNA). Functions as a ssRNA-specific endoribonuclease. Involved in the integration of spacer DNA into the CRISPR cassette.</text>
</comment>
<comment type="cofactor">
    <cofactor evidence="1">
        <name>Mg(2+)</name>
        <dbReference type="ChEBI" id="CHEBI:18420"/>
    </cofactor>
</comment>
<comment type="subunit">
    <text evidence="1">Homodimer, forms a heterotetramer with a Cas1 homodimer.</text>
</comment>
<comment type="similarity">
    <text evidence="1">Belongs to the CRISPR-associated endoribonuclease Cas2 protein family.</text>
</comment>
<name>CAS2A_THEYD</name>
<feature type="chain" id="PRO_0000417737" description="CRISPR-associated endoribonuclease Cas2 1">
    <location>
        <begin position="1"/>
        <end position="92"/>
    </location>
</feature>
<feature type="binding site" evidence="1">
    <location>
        <position position="10"/>
    </location>
    <ligand>
        <name>Mg(2+)</name>
        <dbReference type="ChEBI" id="CHEBI:18420"/>
        <note>catalytic</note>
    </ligand>
</feature>
<reference key="1">
    <citation type="submission" date="2008-08" db="EMBL/GenBank/DDBJ databases">
        <title>The complete genome sequence of Thermodesulfovibrio yellowstonii strain ATCC 51303 / DSM 11347 / YP87.</title>
        <authorList>
            <person name="Dodson R.J."/>
            <person name="Durkin A.S."/>
            <person name="Wu M."/>
            <person name="Eisen J."/>
            <person name="Sutton G."/>
        </authorList>
    </citation>
    <scope>NUCLEOTIDE SEQUENCE [LARGE SCALE GENOMIC DNA]</scope>
    <source>
        <strain>ATCC 51303 / DSM 11347 / YP87</strain>
    </source>
</reference>
<protein>
    <recommendedName>
        <fullName evidence="1">CRISPR-associated endoribonuclease Cas2 1</fullName>
        <ecNumber evidence="1">3.1.-.-</ecNumber>
    </recommendedName>
</protein>
<organism>
    <name type="scientific">Thermodesulfovibrio yellowstonii (strain ATCC 51303 / DSM 11347 / YP87)</name>
    <dbReference type="NCBI Taxonomy" id="289376"/>
    <lineage>
        <taxon>Bacteria</taxon>
        <taxon>Pseudomonadati</taxon>
        <taxon>Nitrospirota</taxon>
        <taxon>Thermodesulfovibrionia</taxon>
        <taxon>Thermodesulfovibrionales</taxon>
        <taxon>Thermodesulfovibrionaceae</taxon>
        <taxon>Thermodesulfovibrio</taxon>
    </lineage>
</organism>
<gene>
    <name evidence="1" type="primary">cas2-1</name>
    <name type="ordered locus">THEYE_A0643</name>
</gene>
<sequence>MRVLYIIAYDITDARRLGQIRYFLKGYSTGGQKSVYECFLEREELKFIISKIKRLINPNEDRVHIFRIDGRSKVITLGIAVPPIDPEYFYIG</sequence>
<evidence type="ECO:0000255" key="1">
    <source>
        <dbReference type="HAMAP-Rule" id="MF_01471"/>
    </source>
</evidence>
<keyword id="KW-0051">Antiviral defense</keyword>
<keyword id="KW-0255">Endonuclease</keyword>
<keyword id="KW-0378">Hydrolase</keyword>
<keyword id="KW-0460">Magnesium</keyword>
<keyword id="KW-0479">Metal-binding</keyword>
<keyword id="KW-0540">Nuclease</keyword>
<keyword id="KW-1185">Reference proteome</keyword>